<accession>E7CLP6</accession>
<dbReference type="EMBL" id="HM233955">
    <property type="protein sequence ID" value="ADV16833.1"/>
    <property type="molecule type" value="mRNA"/>
</dbReference>
<dbReference type="EMBL" id="HM233956">
    <property type="protein sequence ID" value="ADV16834.1"/>
    <property type="molecule type" value="mRNA"/>
</dbReference>
<dbReference type="SMR" id="E7CLP6"/>
<dbReference type="GO" id="GO:0005576">
    <property type="term" value="C:extracellular region"/>
    <property type="evidence" value="ECO:0007669"/>
    <property type="project" value="UniProtKB-SubCell"/>
</dbReference>
<dbReference type="GO" id="GO:0019871">
    <property type="term" value="F:sodium channel inhibitor activity"/>
    <property type="evidence" value="ECO:0007669"/>
    <property type="project" value="InterPro"/>
</dbReference>
<dbReference type="GO" id="GO:0090729">
    <property type="term" value="F:toxin activity"/>
    <property type="evidence" value="ECO:0007669"/>
    <property type="project" value="UniProtKB-KW"/>
</dbReference>
<dbReference type="GO" id="GO:0006952">
    <property type="term" value="P:defense response"/>
    <property type="evidence" value="ECO:0007669"/>
    <property type="project" value="InterPro"/>
</dbReference>
<dbReference type="CDD" id="cd23106">
    <property type="entry name" value="neurotoxins_LC_scorpion"/>
    <property type="match status" value="1"/>
</dbReference>
<dbReference type="FunFam" id="3.30.30.10:FF:000002">
    <property type="entry name" value="Alpha-like toxin BmK-M1"/>
    <property type="match status" value="1"/>
</dbReference>
<dbReference type="Gene3D" id="3.30.30.10">
    <property type="entry name" value="Knottin, scorpion toxin-like"/>
    <property type="match status" value="1"/>
</dbReference>
<dbReference type="InterPro" id="IPR044062">
    <property type="entry name" value="LCN-type_CS_alpha_beta_dom"/>
</dbReference>
<dbReference type="InterPro" id="IPR003614">
    <property type="entry name" value="Scorpion_toxin-like"/>
</dbReference>
<dbReference type="InterPro" id="IPR036574">
    <property type="entry name" value="Scorpion_toxin-like_sf"/>
</dbReference>
<dbReference type="InterPro" id="IPR002061">
    <property type="entry name" value="Scorpion_toxinL/defensin"/>
</dbReference>
<dbReference type="Pfam" id="PF00537">
    <property type="entry name" value="Toxin_3"/>
    <property type="match status" value="1"/>
</dbReference>
<dbReference type="SMART" id="SM00505">
    <property type="entry name" value="Knot1"/>
    <property type="match status" value="1"/>
</dbReference>
<dbReference type="SUPFAM" id="SSF57095">
    <property type="entry name" value="Scorpion toxin-like"/>
    <property type="match status" value="1"/>
</dbReference>
<dbReference type="PROSITE" id="PS51863">
    <property type="entry name" value="LCN_CSAB"/>
    <property type="match status" value="1"/>
</dbReference>
<keyword id="KW-1015">Disulfide bond</keyword>
<keyword id="KW-0872">Ion channel impairing toxin</keyword>
<keyword id="KW-0528">Neurotoxin</keyword>
<keyword id="KW-0964">Secreted</keyword>
<keyword id="KW-0732">Signal</keyword>
<keyword id="KW-0800">Toxin</keyword>
<keyword id="KW-0738">Voltage-gated sodium channel impairing toxin</keyword>
<evidence type="ECO:0000250" key="1"/>
<evidence type="ECO:0000250" key="2">
    <source>
        <dbReference type="UniProtKB" id="P15226"/>
    </source>
</evidence>
<evidence type="ECO:0000250" key="3">
    <source>
        <dbReference type="UniProtKB" id="Q1I176"/>
    </source>
</evidence>
<evidence type="ECO:0000255" key="4"/>
<evidence type="ECO:0000255" key="5">
    <source>
        <dbReference type="PROSITE-ProRule" id="PRU01210"/>
    </source>
</evidence>
<evidence type="ECO:0000305" key="6"/>
<evidence type="ECO:0000305" key="7">
    <source>
    </source>
</evidence>
<evidence type="ECO:0000312" key="8">
    <source>
        <dbReference type="EMBL" id="ADV16833.1"/>
    </source>
</evidence>
<comment type="function">
    <text evidence="1">Beta toxins bind voltage-independently at site-4 of sodium channels (Nav) and shift the voltage of activation toward more negative potentials thereby affecting sodium channel activation and promoting spontaneous and repetitive firing.</text>
</comment>
<comment type="subcellular location">
    <subcellularLocation>
        <location evidence="2">Secreted</location>
    </subcellularLocation>
</comment>
<comment type="tissue specificity">
    <text evidence="7">Expressed by the venom gland.</text>
</comment>
<comment type="domain">
    <text evidence="6">Has the structural arrangement of an alpha-helix connected to antiparallel beta-sheets by disulfide bonds (CS-alpha/beta).</text>
</comment>
<comment type="similarity">
    <text evidence="4">Belongs to the long (4 C-C) scorpion toxin superfamily. Sodium channel inhibitor family. Beta subfamily.</text>
</comment>
<proteinExistence type="inferred from homology"/>
<reference evidence="8" key="1">
    <citation type="journal article" date="2011" name="Toxicon">
        <title>Biochemical and molecular characterization of the venom from the Cuban scorpion Rhopalurus junceus.</title>
        <authorList>
            <person name="Garcia-Gomez B.I."/>
            <person name="Coronas F.I."/>
            <person name="Restano-Cassulini R."/>
            <person name="Rodriguez R.R."/>
            <person name="Possani L.D."/>
        </authorList>
    </citation>
    <scope>NUCLEOTIDE SEQUENCE [MRNA]</scope>
    <source>
        <tissue evidence="8">Venom gland</tissue>
    </source>
</reference>
<organism>
    <name type="scientific">Rhopalurus junceus</name>
    <name type="common">Caribbean blue scorpion</name>
    <dbReference type="NCBI Taxonomy" id="419285"/>
    <lineage>
        <taxon>Eukaryota</taxon>
        <taxon>Metazoa</taxon>
        <taxon>Ecdysozoa</taxon>
        <taxon>Arthropoda</taxon>
        <taxon>Chelicerata</taxon>
        <taxon>Arachnida</taxon>
        <taxon>Scorpiones</taxon>
        <taxon>Buthida</taxon>
        <taxon>Buthoidea</taxon>
        <taxon>Buthidae</taxon>
        <taxon>Rhopalurus</taxon>
    </lineage>
</organism>
<sequence>MKILIFIIASFMLIGVECKEGYPMGSDGCKISCVVNNEYCKGQCSYISTQEDKKWKGSDGYCYFWGLACYCTGLPENAKVWDSKTNKCGG</sequence>
<name>SCX2F_RHOJU</name>
<protein>
    <recommendedName>
        <fullName evidence="3">Putative beta-neurotoxin RjAa2f</fullName>
    </recommendedName>
</protein>
<feature type="signal peptide" evidence="4">
    <location>
        <begin position="1"/>
        <end position="18"/>
    </location>
</feature>
<feature type="chain" id="PRO_0000413451" description="Putative beta-neurotoxin RjAa2f" evidence="4">
    <location>
        <begin position="19"/>
        <end position="90"/>
    </location>
</feature>
<feature type="domain" description="LCN-type CS-alpha/beta" evidence="5">
    <location>
        <begin position="19"/>
        <end position="89"/>
    </location>
</feature>
<feature type="disulfide bond" evidence="5">
    <location>
        <begin position="29"/>
        <end position="88"/>
    </location>
</feature>
<feature type="disulfide bond" evidence="5">
    <location>
        <begin position="33"/>
        <end position="62"/>
    </location>
</feature>
<feature type="disulfide bond" evidence="5">
    <location>
        <begin position="40"/>
        <end position="69"/>
    </location>
</feature>
<feature type="disulfide bond" evidence="5">
    <location>
        <begin position="44"/>
        <end position="71"/>
    </location>
</feature>